<protein>
    <recommendedName>
        <fullName evidence="1">Peptidyl-tRNA hydrolase</fullName>
        <shortName evidence="1">Pth</shortName>
        <ecNumber evidence="1">3.1.1.29</ecNumber>
    </recommendedName>
</protein>
<feature type="chain" id="PRO_1000010559" description="Peptidyl-tRNA hydrolase">
    <location>
        <begin position="1"/>
        <end position="194"/>
    </location>
</feature>
<feature type="active site" description="Proton acceptor" evidence="1">
    <location>
        <position position="22"/>
    </location>
</feature>
<feature type="binding site" evidence="1">
    <location>
        <position position="17"/>
    </location>
    <ligand>
        <name>tRNA</name>
        <dbReference type="ChEBI" id="CHEBI:17843"/>
    </ligand>
</feature>
<feature type="binding site" evidence="1">
    <location>
        <position position="69"/>
    </location>
    <ligand>
        <name>tRNA</name>
        <dbReference type="ChEBI" id="CHEBI:17843"/>
    </ligand>
</feature>
<feature type="binding site" evidence="1">
    <location>
        <position position="71"/>
    </location>
    <ligand>
        <name>tRNA</name>
        <dbReference type="ChEBI" id="CHEBI:17843"/>
    </ligand>
</feature>
<feature type="binding site" evidence="1">
    <location>
        <position position="117"/>
    </location>
    <ligand>
        <name>tRNA</name>
        <dbReference type="ChEBI" id="CHEBI:17843"/>
    </ligand>
</feature>
<feature type="site" description="Discriminates between blocked and unblocked aminoacyl-tRNA" evidence="1">
    <location>
        <position position="12"/>
    </location>
</feature>
<feature type="site" description="Stabilizes the basic form of H active site to accept a proton" evidence="1">
    <location>
        <position position="96"/>
    </location>
</feature>
<accession>A1R4G4</accession>
<comment type="function">
    <text evidence="1">Hydrolyzes ribosome-free peptidyl-tRNAs (with 1 or more amino acids incorporated), which drop off the ribosome during protein synthesis, or as a result of ribosome stalling.</text>
</comment>
<comment type="function">
    <text evidence="1">Catalyzes the release of premature peptidyl moieties from peptidyl-tRNA molecules trapped in stalled 50S ribosomal subunits, and thus maintains levels of free tRNAs and 50S ribosomes.</text>
</comment>
<comment type="catalytic activity">
    <reaction evidence="1">
        <text>an N-acyl-L-alpha-aminoacyl-tRNA + H2O = an N-acyl-L-amino acid + a tRNA + H(+)</text>
        <dbReference type="Rhea" id="RHEA:54448"/>
        <dbReference type="Rhea" id="RHEA-COMP:10123"/>
        <dbReference type="Rhea" id="RHEA-COMP:13883"/>
        <dbReference type="ChEBI" id="CHEBI:15377"/>
        <dbReference type="ChEBI" id="CHEBI:15378"/>
        <dbReference type="ChEBI" id="CHEBI:59874"/>
        <dbReference type="ChEBI" id="CHEBI:78442"/>
        <dbReference type="ChEBI" id="CHEBI:138191"/>
        <dbReference type="EC" id="3.1.1.29"/>
    </reaction>
</comment>
<comment type="subunit">
    <text evidence="1">Monomer.</text>
</comment>
<comment type="subcellular location">
    <subcellularLocation>
        <location evidence="1">Cytoplasm</location>
    </subcellularLocation>
</comment>
<comment type="similarity">
    <text evidence="1">Belongs to the PTH family.</text>
</comment>
<sequence>MTDTWLIVGLGNPGSEYSNNRHNVGQMVLDELASRMGGKFKVHKARAQVVEGRLGIGGPRVVLAKPMTYMNVSGGPVAGLCNFFDIAPDHVIAVHDEIDIPFNTVKLKMGGGEGGHNGLRDISKALATKDYLRVRVGVGRPPGRMETADYVLRDFATAEKKELPFLLDEAADAVELLMDQGLLAAQQKHHPAKA</sequence>
<organism>
    <name type="scientific">Paenarthrobacter aurescens (strain TC1)</name>
    <dbReference type="NCBI Taxonomy" id="290340"/>
    <lineage>
        <taxon>Bacteria</taxon>
        <taxon>Bacillati</taxon>
        <taxon>Actinomycetota</taxon>
        <taxon>Actinomycetes</taxon>
        <taxon>Micrococcales</taxon>
        <taxon>Micrococcaceae</taxon>
        <taxon>Paenarthrobacter</taxon>
    </lineage>
</organism>
<proteinExistence type="inferred from homology"/>
<dbReference type="EC" id="3.1.1.29" evidence="1"/>
<dbReference type="EMBL" id="CP000474">
    <property type="protein sequence ID" value="ABM09108.1"/>
    <property type="molecule type" value="Genomic_DNA"/>
</dbReference>
<dbReference type="RefSeq" id="WP_011774073.1">
    <property type="nucleotide sequence ID" value="NC_008711.1"/>
</dbReference>
<dbReference type="SMR" id="A1R4G4"/>
<dbReference type="STRING" id="290340.AAur_1346"/>
<dbReference type="KEGG" id="aau:AAur_1346"/>
<dbReference type="eggNOG" id="COG0193">
    <property type="taxonomic scope" value="Bacteria"/>
</dbReference>
<dbReference type="HOGENOM" id="CLU_062456_2_2_11"/>
<dbReference type="OrthoDB" id="9800507at2"/>
<dbReference type="Proteomes" id="UP000000637">
    <property type="component" value="Chromosome"/>
</dbReference>
<dbReference type="GO" id="GO:0005737">
    <property type="term" value="C:cytoplasm"/>
    <property type="evidence" value="ECO:0007669"/>
    <property type="project" value="UniProtKB-SubCell"/>
</dbReference>
<dbReference type="GO" id="GO:0004045">
    <property type="term" value="F:peptidyl-tRNA hydrolase activity"/>
    <property type="evidence" value="ECO:0007669"/>
    <property type="project" value="UniProtKB-UniRule"/>
</dbReference>
<dbReference type="GO" id="GO:0000049">
    <property type="term" value="F:tRNA binding"/>
    <property type="evidence" value="ECO:0007669"/>
    <property type="project" value="UniProtKB-UniRule"/>
</dbReference>
<dbReference type="GO" id="GO:0006515">
    <property type="term" value="P:protein quality control for misfolded or incompletely synthesized proteins"/>
    <property type="evidence" value="ECO:0007669"/>
    <property type="project" value="UniProtKB-UniRule"/>
</dbReference>
<dbReference type="GO" id="GO:0072344">
    <property type="term" value="P:rescue of stalled ribosome"/>
    <property type="evidence" value="ECO:0007669"/>
    <property type="project" value="UniProtKB-UniRule"/>
</dbReference>
<dbReference type="CDD" id="cd00462">
    <property type="entry name" value="PTH"/>
    <property type="match status" value="1"/>
</dbReference>
<dbReference type="FunFam" id="3.40.50.1470:FF:000001">
    <property type="entry name" value="Peptidyl-tRNA hydrolase"/>
    <property type="match status" value="1"/>
</dbReference>
<dbReference type="Gene3D" id="3.40.50.1470">
    <property type="entry name" value="Peptidyl-tRNA hydrolase"/>
    <property type="match status" value="1"/>
</dbReference>
<dbReference type="HAMAP" id="MF_00083">
    <property type="entry name" value="Pept_tRNA_hydro_bact"/>
    <property type="match status" value="1"/>
</dbReference>
<dbReference type="InterPro" id="IPR001328">
    <property type="entry name" value="Pept_tRNA_hydro"/>
</dbReference>
<dbReference type="InterPro" id="IPR018171">
    <property type="entry name" value="Pept_tRNA_hydro_CS"/>
</dbReference>
<dbReference type="InterPro" id="IPR036416">
    <property type="entry name" value="Pept_tRNA_hydro_sf"/>
</dbReference>
<dbReference type="NCBIfam" id="TIGR00447">
    <property type="entry name" value="pth"/>
    <property type="match status" value="1"/>
</dbReference>
<dbReference type="PANTHER" id="PTHR17224">
    <property type="entry name" value="PEPTIDYL-TRNA HYDROLASE"/>
    <property type="match status" value="1"/>
</dbReference>
<dbReference type="PANTHER" id="PTHR17224:SF1">
    <property type="entry name" value="PEPTIDYL-TRNA HYDROLASE"/>
    <property type="match status" value="1"/>
</dbReference>
<dbReference type="Pfam" id="PF01195">
    <property type="entry name" value="Pept_tRNA_hydro"/>
    <property type="match status" value="1"/>
</dbReference>
<dbReference type="SUPFAM" id="SSF53178">
    <property type="entry name" value="Peptidyl-tRNA hydrolase-like"/>
    <property type="match status" value="1"/>
</dbReference>
<dbReference type="PROSITE" id="PS01195">
    <property type="entry name" value="PEPT_TRNA_HYDROL_1"/>
    <property type="match status" value="1"/>
</dbReference>
<dbReference type="PROSITE" id="PS01196">
    <property type="entry name" value="PEPT_TRNA_HYDROL_2"/>
    <property type="match status" value="1"/>
</dbReference>
<name>PTH_PAEAT</name>
<gene>
    <name evidence="1" type="primary">pth</name>
    <name type="ordered locus">AAur_1346</name>
</gene>
<evidence type="ECO:0000255" key="1">
    <source>
        <dbReference type="HAMAP-Rule" id="MF_00083"/>
    </source>
</evidence>
<reference key="1">
    <citation type="journal article" date="2006" name="PLoS Genet.">
        <title>Secrets of soil survival revealed by the genome sequence of Arthrobacter aurescens TC1.</title>
        <authorList>
            <person name="Mongodin E.F."/>
            <person name="Shapir N."/>
            <person name="Daugherty S.C."/>
            <person name="DeBoy R.T."/>
            <person name="Emerson J.B."/>
            <person name="Shvartzbeyn A."/>
            <person name="Radune D."/>
            <person name="Vamathevan J."/>
            <person name="Riggs F."/>
            <person name="Grinberg V."/>
            <person name="Khouri H.M."/>
            <person name="Wackett L.P."/>
            <person name="Nelson K.E."/>
            <person name="Sadowsky M.J."/>
        </authorList>
    </citation>
    <scope>NUCLEOTIDE SEQUENCE [LARGE SCALE GENOMIC DNA]</scope>
    <source>
        <strain>TC1</strain>
    </source>
</reference>
<keyword id="KW-0963">Cytoplasm</keyword>
<keyword id="KW-0378">Hydrolase</keyword>
<keyword id="KW-0694">RNA-binding</keyword>
<keyword id="KW-0820">tRNA-binding</keyword>